<accession>Q97JB4</accession>
<proteinExistence type="inferred from homology"/>
<keyword id="KW-0169">Cobalamin biosynthesis</keyword>
<keyword id="KW-0328">Glycosyltransferase</keyword>
<keyword id="KW-1185">Reference proteome</keyword>
<keyword id="KW-0808">Transferase</keyword>
<organism>
    <name type="scientific">Clostridium acetobutylicum (strain ATCC 824 / DSM 792 / JCM 1419 / IAM 19013 / LMG 5710 / NBRC 13948 / NRRL B-527 / VKM B-1787 / 2291 / W)</name>
    <dbReference type="NCBI Taxonomy" id="272562"/>
    <lineage>
        <taxon>Bacteria</taxon>
        <taxon>Bacillati</taxon>
        <taxon>Bacillota</taxon>
        <taxon>Clostridia</taxon>
        <taxon>Eubacteriales</taxon>
        <taxon>Clostridiaceae</taxon>
        <taxon>Clostridium</taxon>
    </lineage>
</organism>
<dbReference type="EC" id="2.4.2.21" evidence="1"/>
<dbReference type="EMBL" id="AE001437">
    <property type="protein sequence ID" value="AAK79340.1"/>
    <property type="molecule type" value="Genomic_DNA"/>
</dbReference>
<dbReference type="PIR" id="A97069">
    <property type="entry name" value="A97069"/>
</dbReference>
<dbReference type="RefSeq" id="NP_348000.1">
    <property type="nucleotide sequence ID" value="NC_003030.1"/>
</dbReference>
<dbReference type="RefSeq" id="WP_010964681.1">
    <property type="nucleotide sequence ID" value="NC_003030.1"/>
</dbReference>
<dbReference type="SMR" id="Q97JB4"/>
<dbReference type="STRING" id="272562.CA_C1372"/>
<dbReference type="GeneID" id="44997877"/>
<dbReference type="KEGG" id="cac:CA_C1372"/>
<dbReference type="PATRIC" id="fig|272562.8.peg.1577"/>
<dbReference type="eggNOG" id="COG2038">
    <property type="taxonomic scope" value="Bacteria"/>
</dbReference>
<dbReference type="HOGENOM" id="CLU_002982_0_0_9"/>
<dbReference type="OrthoDB" id="9781491at2"/>
<dbReference type="UniPathway" id="UPA00061">
    <property type="reaction ID" value="UER00516"/>
</dbReference>
<dbReference type="Proteomes" id="UP000000814">
    <property type="component" value="Chromosome"/>
</dbReference>
<dbReference type="GO" id="GO:0008939">
    <property type="term" value="F:nicotinate-nucleotide-dimethylbenzimidazole phosphoribosyltransferase activity"/>
    <property type="evidence" value="ECO:0007669"/>
    <property type="project" value="UniProtKB-UniRule"/>
</dbReference>
<dbReference type="GO" id="GO:0009236">
    <property type="term" value="P:cobalamin biosynthetic process"/>
    <property type="evidence" value="ECO:0007669"/>
    <property type="project" value="UniProtKB-KW"/>
</dbReference>
<dbReference type="CDD" id="cd02439">
    <property type="entry name" value="DMB-PRT_CobT"/>
    <property type="match status" value="1"/>
</dbReference>
<dbReference type="FunFam" id="3.40.50.10210:FF:000001">
    <property type="entry name" value="Nicotinate-nucleotide--dimethylbenzimidazole phosphoribosyltransferase"/>
    <property type="match status" value="1"/>
</dbReference>
<dbReference type="Gene3D" id="1.10.1610.10">
    <property type="match status" value="1"/>
</dbReference>
<dbReference type="Gene3D" id="3.40.50.10210">
    <property type="match status" value="1"/>
</dbReference>
<dbReference type="HAMAP" id="MF_00230">
    <property type="entry name" value="CobT"/>
    <property type="match status" value="1"/>
</dbReference>
<dbReference type="InterPro" id="IPR003200">
    <property type="entry name" value="Nict_dMeBzImd_PRibTrfase"/>
</dbReference>
<dbReference type="InterPro" id="IPR017846">
    <property type="entry name" value="Nict_dMeBzImd_PRibTrfase_bact"/>
</dbReference>
<dbReference type="InterPro" id="IPR023195">
    <property type="entry name" value="Nict_dMeBzImd_PRibTrfase_N"/>
</dbReference>
<dbReference type="InterPro" id="IPR036087">
    <property type="entry name" value="Nict_dMeBzImd_PRibTrfase_sf"/>
</dbReference>
<dbReference type="NCBIfam" id="TIGR03160">
    <property type="entry name" value="cobT_DBIPRT"/>
    <property type="match status" value="1"/>
</dbReference>
<dbReference type="NCBIfam" id="NF000996">
    <property type="entry name" value="PRK00105.1"/>
    <property type="match status" value="1"/>
</dbReference>
<dbReference type="PANTHER" id="PTHR43463">
    <property type="entry name" value="NICOTINATE-NUCLEOTIDE--DIMETHYLBENZIMIDAZOLE PHOSPHORIBOSYLTRANSFERASE"/>
    <property type="match status" value="1"/>
</dbReference>
<dbReference type="PANTHER" id="PTHR43463:SF1">
    <property type="entry name" value="NICOTINATE-NUCLEOTIDE--DIMETHYLBENZIMIDAZOLE PHOSPHORIBOSYLTRANSFERASE"/>
    <property type="match status" value="1"/>
</dbReference>
<dbReference type="Pfam" id="PF02277">
    <property type="entry name" value="DBI_PRT"/>
    <property type="match status" value="1"/>
</dbReference>
<dbReference type="SUPFAM" id="SSF52733">
    <property type="entry name" value="Nicotinate mononucleotide:5,6-dimethylbenzimidazole phosphoribosyltransferase (CobT)"/>
    <property type="match status" value="1"/>
</dbReference>
<sequence>MNIENLIKGINGLDNKVMSKIQKRLDNLTKPLGSLGTLEDIVKQLGGITGEVYPSVKNKTVIIMCADNGIVEENVSSCPKSVTASVTRNFMKGFTGINVFTRHAGADIEVIDIGVDADINEEGIINKKIRRGTSNMIKGAAMTRDEALKGLEVGIEAVKELKDKGVNLIGTGEMGVGNTTTSSAVASVLTGCPVDEMVGIGSGLTKEAFRNKIQIVKEAIALNKPNKEDPIDVLSKVGGFDIAGLAGCFLGAAIYRIPIVIDGFISASAALLAVKINPLVKNFIIPSHGSAEPGSKWIMKELDLEPMLNLKMRLGEGTGAALAFQIVDMAVFSYLEMGTFENAEIEPYKPLK</sequence>
<name>COBT_CLOAB</name>
<protein>
    <recommendedName>
        <fullName evidence="1">Nicotinate-nucleotide--dimethylbenzimidazole phosphoribosyltransferase</fullName>
        <shortName evidence="1">NN:DBI PRT</shortName>
        <ecNumber evidence="1">2.4.2.21</ecNumber>
    </recommendedName>
    <alternativeName>
        <fullName evidence="1">N(1)-alpha-phosphoribosyltransferase</fullName>
    </alternativeName>
</protein>
<reference key="1">
    <citation type="journal article" date="2001" name="J. Bacteriol.">
        <title>Genome sequence and comparative analysis of the solvent-producing bacterium Clostridium acetobutylicum.</title>
        <authorList>
            <person name="Noelling J."/>
            <person name="Breton G."/>
            <person name="Omelchenko M.V."/>
            <person name="Makarova K.S."/>
            <person name="Zeng Q."/>
            <person name="Gibson R."/>
            <person name="Lee H.M."/>
            <person name="Dubois J."/>
            <person name="Qiu D."/>
            <person name="Hitti J."/>
            <person name="Wolf Y.I."/>
            <person name="Tatusov R.L."/>
            <person name="Sabathe F."/>
            <person name="Doucette-Stamm L.A."/>
            <person name="Soucaille P."/>
            <person name="Daly M.J."/>
            <person name="Bennett G.N."/>
            <person name="Koonin E.V."/>
            <person name="Smith D.R."/>
        </authorList>
    </citation>
    <scope>NUCLEOTIDE SEQUENCE [LARGE SCALE GENOMIC DNA]</scope>
    <source>
        <strain>ATCC 824 / DSM 792 / JCM 1419 / IAM 19013 / LMG 5710 / NBRC 13948 / NRRL B-527 / VKM B-1787 / 2291 / W</strain>
    </source>
</reference>
<comment type="function">
    <text evidence="1">Catalyzes the synthesis of alpha-ribazole-5'-phosphate from nicotinate mononucleotide (NAMN) and 5,6-dimethylbenzimidazole (DMB).</text>
</comment>
<comment type="catalytic activity">
    <reaction evidence="1">
        <text>5,6-dimethylbenzimidazole + nicotinate beta-D-ribonucleotide = alpha-ribazole 5'-phosphate + nicotinate + H(+)</text>
        <dbReference type="Rhea" id="RHEA:11196"/>
        <dbReference type="ChEBI" id="CHEBI:15378"/>
        <dbReference type="ChEBI" id="CHEBI:15890"/>
        <dbReference type="ChEBI" id="CHEBI:32544"/>
        <dbReference type="ChEBI" id="CHEBI:57502"/>
        <dbReference type="ChEBI" id="CHEBI:57918"/>
        <dbReference type="EC" id="2.4.2.21"/>
    </reaction>
</comment>
<comment type="pathway">
    <text evidence="1">Nucleoside biosynthesis; alpha-ribazole biosynthesis; alpha-ribazole from 5,6-dimethylbenzimidazole: step 1/2.</text>
</comment>
<comment type="similarity">
    <text evidence="1">Belongs to the CobT family.</text>
</comment>
<feature type="chain" id="PRO_0000167042" description="Nicotinate-nucleotide--dimethylbenzimidazole phosphoribosyltransferase">
    <location>
        <begin position="1"/>
        <end position="352"/>
    </location>
</feature>
<feature type="active site" description="Proton acceptor" evidence="1">
    <location>
        <position position="316"/>
    </location>
</feature>
<evidence type="ECO:0000255" key="1">
    <source>
        <dbReference type="HAMAP-Rule" id="MF_00230"/>
    </source>
</evidence>
<gene>
    <name evidence="1" type="primary">cobT</name>
    <name type="ordered locus">CA_C1372</name>
</gene>